<feature type="chain" id="PRO_0000255693" description="Small ribosomal subunit protein uS17">
    <location>
        <begin position="1"/>
        <end position="93"/>
    </location>
</feature>
<protein>
    <recommendedName>
        <fullName evidence="1">Small ribosomal subunit protein uS17</fullName>
    </recommendedName>
    <alternativeName>
        <fullName evidence="2">30S ribosomal protein S17</fullName>
    </alternativeName>
</protein>
<reference key="1">
    <citation type="journal article" date="2006" name="Proc. Natl. Acad. Sci. U.S.A.">
        <title>The complete genome of Rhodococcus sp. RHA1 provides insights into a catabolic powerhouse.</title>
        <authorList>
            <person name="McLeod M.P."/>
            <person name="Warren R.L."/>
            <person name="Hsiao W.W.L."/>
            <person name="Araki N."/>
            <person name="Myhre M."/>
            <person name="Fernandes C."/>
            <person name="Miyazawa D."/>
            <person name="Wong W."/>
            <person name="Lillquist A.L."/>
            <person name="Wang D."/>
            <person name="Dosanjh M."/>
            <person name="Hara H."/>
            <person name="Petrescu A."/>
            <person name="Morin R.D."/>
            <person name="Yang G."/>
            <person name="Stott J.M."/>
            <person name="Schein J.E."/>
            <person name="Shin H."/>
            <person name="Smailus D."/>
            <person name="Siddiqui A.S."/>
            <person name="Marra M.A."/>
            <person name="Jones S.J.M."/>
            <person name="Holt R."/>
            <person name="Brinkman F.S.L."/>
            <person name="Miyauchi K."/>
            <person name="Fukuda M."/>
            <person name="Davies J.E."/>
            <person name="Mohn W.W."/>
            <person name="Eltis L.D."/>
        </authorList>
    </citation>
    <scope>NUCLEOTIDE SEQUENCE [LARGE SCALE GENOMIC DNA]</scope>
    <source>
        <strain>RHA1</strain>
    </source>
</reference>
<evidence type="ECO:0000255" key="1">
    <source>
        <dbReference type="HAMAP-Rule" id="MF_01345"/>
    </source>
</evidence>
<evidence type="ECO:0000305" key="2"/>
<name>RS17_RHOJR</name>
<sequence>MSEEKAVSTEERGSRKVRTGYVVSDKMEKTIVVELEDRVKHPLYGKIIRRTSKVKAHDENGVAGIGDRVQLMETRPLSATKHWRLVEVLEKAK</sequence>
<comment type="function">
    <text evidence="1">One of the primary rRNA binding proteins, it binds specifically to the 5'-end of 16S ribosomal RNA.</text>
</comment>
<comment type="subunit">
    <text evidence="1">Part of the 30S ribosomal subunit.</text>
</comment>
<comment type="similarity">
    <text evidence="1">Belongs to the universal ribosomal protein uS17 family.</text>
</comment>
<organism>
    <name type="scientific">Rhodococcus jostii (strain RHA1)</name>
    <dbReference type="NCBI Taxonomy" id="101510"/>
    <lineage>
        <taxon>Bacteria</taxon>
        <taxon>Bacillati</taxon>
        <taxon>Actinomycetota</taxon>
        <taxon>Actinomycetes</taxon>
        <taxon>Mycobacteriales</taxon>
        <taxon>Nocardiaceae</taxon>
        <taxon>Rhodococcus</taxon>
    </lineage>
</organism>
<accession>Q0S3G7</accession>
<gene>
    <name evidence="1" type="primary">rpsQ</name>
    <name type="ordered locus">RHA1_ro06142</name>
</gene>
<dbReference type="EMBL" id="CP000431">
    <property type="protein sequence ID" value="ABG97919.1"/>
    <property type="molecule type" value="Genomic_DNA"/>
</dbReference>
<dbReference type="RefSeq" id="WP_005239638.1">
    <property type="nucleotide sequence ID" value="NC_008268.1"/>
</dbReference>
<dbReference type="SMR" id="Q0S3G7"/>
<dbReference type="GeneID" id="69890525"/>
<dbReference type="KEGG" id="rha:RHA1_ro06142"/>
<dbReference type="eggNOG" id="COG0186">
    <property type="taxonomic scope" value="Bacteria"/>
</dbReference>
<dbReference type="HOGENOM" id="CLU_073626_1_0_11"/>
<dbReference type="OrthoDB" id="9811714at2"/>
<dbReference type="Proteomes" id="UP000008710">
    <property type="component" value="Chromosome"/>
</dbReference>
<dbReference type="GO" id="GO:0022627">
    <property type="term" value="C:cytosolic small ribosomal subunit"/>
    <property type="evidence" value="ECO:0007669"/>
    <property type="project" value="TreeGrafter"/>
</dbReference>
<dbReference type="GO" id="GO:0019843">
    <property type="term" value="F:rRNA binding"/>
    <property type="evidence" value="ECO:0007669"/>
    <property type="project" value="UniProtKB-UniRule"/>
</dbReference>
<dbReference type="GO" id="GO:0003735">
    <property type="term" value="F:structural constituent of ribosome"/>
    <property type="evidence" value="ECO:0007669"/>
    <property type="project" value="InterPro"/>
</dbReference>
<dbReference type="GO" id="GO:0006412">
    <property type="term" value="P:translation"/>
    <property type="evidence" value="ECO:0007669"/>
    <property type="project" value="UniProtKB-UniRule"/>
</dbReference>
<dbReference type="CDD" id="cd00364">
    <property type="entry name" value="Ribosomal_uS17"/>
    <property type="match status" value="1"/>
</dbReference>
<dbReference type="FunFam" id="2.40.50.140:FF:000026">
    <property type="entry name" value="30S ribosomal protein S17"/>
    <property type="match status" value="1"/>
</dbReference>
<dbReference type="Gene3D" id="2.40.50.140">
    <property type="entry name" value="Nucleic acid-binding proteins"/>
    <property type="match status" value="1"/>
</dbReference>
<dbReference type="HAMAP" id="MF_01345_B">
    <property type="entry name" value="Ribosomal_uS17_B"/>
    <property type="match status" value="1"/>
</dbReference>
<dbReference type="InterPro" id="IPR012340">
    <property type="entry name" value="NA-bd_OB-fold"/>
</dbReference>
<dbReference type="InterPro" id="IPR000266">
    <property type="entry name" value="Ribosomal_uS17"/>
</dbReference>
<dbReference type="InterPro" id="IPR019984">
    <property type="entry name" value="Ribosomal_uS17_bact/chlr"/>
</dbReference>
<dbReference type="InterPro" id="IPR019979">
    <property type="entry name" value="Ribosomal_uS17_CS"/>
</dbReference>
<dbReference type="NCBIfam" id="NF004123">
    <property type="entry name" value="PRK05610.1"/>
    <property type="match status" value="1"/>
</dbReference>
<dbReference type="NCBIfam" id="TIGR03635">
    <property type="entry name" value="uS17_bact"/>
    <property type="match status" value="1"/>
</dbReference>
<dbReference type="PANTHER" id="PTHR10744">
    <property type="entry name" value="40S RIBOSOMAL PROTEIN S11 FAMILY MEMBER"/>
    <property type="match status" value="1"/>
</dbReference>
<dbReference type="PANTHER" id="PTHR10744:SF1">
    <property type="entry name" value="SMALL RIBOSOMAL SUBUNIT PROTEIN US17M"/>
    <property type="match status" value="1"/>
</dbReference>
<dbReference type="Pfam" id="PF00366">
    <property type="entry name" value="Ribosomal_S17"/>
    <property type="match status" value="1"/>
</dbReference>
<dbReference type="PRINTS" id="PR00973">
    <property type="entry name" value="RIBOSOMALS17"/>
</dbReference>
<dbReference type="SUPFAM" id="SSF50249">
    <property type="entry name" value="Nucleic acid-binding proteins"/>
    <property type="match status" value="1"/>
</dbReference>
<dbReference type="PROSITE" id="PS00056">
    <property type="entry name" value="RIBOSOMAL_S17"/>
    <property type="match status" value="1"/>
</dbReference>
<proteinExistence type="inferred from homology"/>
<keyword id="KW-0687">Ribonucleoprotein</keyword>
<keyword id="KW-0689">Ribosomal protein</keyword>
<keyword id="KW-0694">RNA-binding</keyword>
<keyword id="KW-0699">rRNA-binding</keyword>